<evidence type="ECO:0000250" key="1">
    <source>
        <dbReference type="UniProtKB" id="Q9UH73"/>
    </source>
</evidence>
<evidence type="ECO:0000256" key="2">
    <source>
        <dbReference type="SAM" id="MobiDB-lite"/>
    </source>
</evidence>
<evidence type="ECO:0000269" key="3">
    <source>
    </source>
</evidence>
<evidence type="ECO:0000269" key="4">
    <source>
    </source>
</evidence>
<evidence type="ECO:0000269" key="5">
    <source>
    </source>
</evidence>
<evidence type="ECO:0000269" key="6">
    <source>
    </source>
</evidence>
<evidence type="ECO:0000269" key="7">
    <source>
    </source>
</evidence>
<evidence type="ECO:0000269" key="8">
    <source>
    </source>
</evidence>
<evidence type="ECO:0000269" key="9">
    <source>
    </source>
</evidence>
<evidence type="ECO:0000305" key="10"/>
<evidence type="ECO:0007744" key="11">
    <source>
        <dbReference type="PDB" id="3MLN"/>
    </source>
</evidence>
<evidence type="ECO:0007744" key="12">
    <source>
        <dbReference type="PDB" id="3MLO"/>
    </source>
</evidence>
<evidence type="ECO:0007744" key="13">
    <source>
        <dbReference type="PDB" id="3MLP"/>
    </source>
</evidence>
<evidence type="ECO:0007829" key="14">
    <source>
        <dbReference type="PDB" id="3MLN"/>
    </source>
</evidence>
<evidence type="ECO:0007829" key="15">
    <source>
        <dbReference type="PDB" id="3MLP"/>
    </source>
</evidence>
<accession>Q07802</accession>
<feature type="chain" id="PRO_0000107826" description="Transcription factor COE1">
    <location>
        <begin position="1"/>
        <end position="591"/>
    </location>
</feature>
<feature type="domain" description="IPT/TIG">
    <location>
        <begin position="262"/>
        <end position="345"/>
    </location>
</feature>
<feature type="zinc finger region" description="C5-type" evidence="5 11 12 13">
    <location>
        <begin position="151"/>
        <end position="170"/>
    </location>
</feature>
<feature type="region of interest" description="Disordered" evidence="2">
    <location>
        <begin position="1"/>
        <end position="21"/>
    </location>
</feature>
<feature type="region of interest" description="Interaction with DNA" evidence="5 11 12 13">
    <location>
        <begin position="63"/>
        <end position="66"/>
    </location>
</feature>
<feature type="region of interest" description="Interaction with DNA" evidence="5 11 12 13">
    <location>
        <begin position="197"/>
        <end position="204"/>
    </location>
</feature>
<feature type="region of interest" description="Interaction with DNA" evidence="5 11 12 13">
    <location>
        <begin position="236"/>
        <end position="239"/>
    </location>
</feature>
<feature type="region of interest" description="Disordered" evidence="2">
    <location>
        <begin position="457"/>
        <end position="480"/>
    </location>
</feature>
<feature type="compositionally biased region" description="Polar residues" evidence="2">
    <location>
        <begin position="1"/>
        <end position="14"/>
    </location>
</feature>
<feature type="site" description="Interaction with DNA" evidence="5 11 12 13">
    <location>
        <position position="163"/>
    </location>
</feature>
<feature type="site" description="Interaction with DNA" evidence="5 11 12 13">
    <location>
        <position position="172"/>
    </location>
</feature>
<feature type="modified residue" description="N-acetylmethionine" evidence="1">
    <location>
        <position position="1"/>
    </location>
</feature>
<feature type="cross-link" description="Glycyl lysine isopeptide (Lys-Gly) (interchain with G-Cter in SUMO1); alternate" evidence="1">
    <location>
        <position position="16"/>
    </location>
</feature>
<feature type="cross-link" description="Glycyl lysine isopeptide (Lys-Gly) (interchain with G-Cter in SUMO2); alternate" evidence="1">
    <location>
        <position position="16"/>
    </location>
</feature>
<feature type="splice variant" id="VSP_001112" description="In isoform Short." evidence="10">
    <location>
        <begin position="252"/>
        <end position="259"/>
    </location>
</feature>
<feature type="mutagenesis site" description="Strongly reduced interaction with DNA." evidence="5">
    <original>R</original>
    <variation>A</variation>
    <location>
        <position position="63"/>
    </location>
</feature>
<feature type="mutagenesis site" description="Reduced interaction with DNA." evidence="5">
    <original>N</original>
    <variation>A</variation>
    <location>
        <position position="66"/>
    </location>
</feature>
<feature type="mutagenesis site" description="Strongly reduced interaction with DNA." evidence="5">
    <original>R</original>
    <variation>A</variation>
    <location>
        <position position="163"/>
    </location>
</feature>
<feature type="mutagenesis site" description="Strongly reduced interaction with DNA." evidence="5">
    <original>G</original>
    <variation>E</variation>
    <location>
        <position position="203"/>
    </location>
</feature>
<feature type="mutagenesis site" description="Strongly reduced interaction with DNA." evidence="5">
    <original>H</original>
    <variation>A</variation>
    <location>
        <position position="235"/>
    </location>
</feature>
<feature type="sequence conflict" description="In Ref. 1; AA sequence." evidence="10" ref="1">
    <original>T</original>
    <variation>F</variation>
    <location>
        <position position="87"/>
    </location>
</feature>
<feature type="sequence conflict" description="In Ref. 1; AA sequence." evidence="10" ref="1">
    <original>F</original>
    <variation>L</variation>
    <location>
        <position position="89"/>
    </location>
</feature>
<feature type="strand" evidence="14">
    <location>
        <begin position="36"/>
        <end position="38"/>
    </location>
</feature>
<feature type="helix" evidence="14">
    <location>
        <begin position="39"/>
        <end position="44"/>
    </location>
</feature>
<feature type="strand" evidence="14">
    <location>
        <begin position="48"/>
        <end position="56"/>
    </location>
</feature>
<feature type="strand" evidence="14">
    <location>
        <begin position="60"/>
        <end position="63"/>
    </location>
</feature>
<feature type="strand" evidence="14">
    <location>
        <begin position="66"/>
        <end position="76"/>
    </location>
</feature>
<feature type="strand" evidence="14">
    <location>
        <begin position="83"/>
        <end position="93"/>
    </location>
</feature>
<feature type="helix" evidence="14">
    <location>
        <begin position="95"/>
        <end position="97"/>
    </location>
</feature>
<feature type="helix" evidence="14">
    <location>
        <begin position="99"/>
        <end position="101"/>
    </location>
</feature>
<feature type="strand" evidence="14">
    <location>
        <begin position="108"/>
        <end position="115"/>
    </location>
</feature>
<feature type="strand" evidence="14">
    <location>
        <begin position="121"/>
        <end position="132"/>
    </location>
</feature>
<feature type="turn" evidence="14">
    <location>
        <begin position="133"/>
        <end position="135"/>
    </location>
</feature>
<feature type="helix" evidence="14">
    <location>
        <begin position="148"/>
        <end position="150"/>
    </location>
</feature>
<feature type="strand" evidence="14">
    <location>
        <begin position="152"/>
        <end position="155"/>
    </location>
</feature>
<feature type="helix" evidence="14">
    <location>
        <begin position="157"/>
        <end position="160"/>
    </location>
</feature>
<feature type="helix" evidence="14">
    <location>
        <begin position="162"/>
        <end position="165"/>
    </location>
</feature>
<feature type="helix" evidence="14">
    <location>
        <begin position="171"/>
        <end position="175"/>
    </location>
</feature>
<feature type="strand" evidence="14">
    <location>
        <begin position="181"/>
        <end position="183"/>
    </location>
</feature>
<feature type="turn" evidence="14">
    <location>
        <begin position="184"/>
        <end position="186"/>
    </location>
</feature>
<feature type="strand" evidence="14">
    <location>
        <begin position="187"/>
        <end position="194"/>
    </location>
</feature>
<feature type="strand" evidence="14">
    <location>
        <begin position="201"/>
        <end position="204"/>
    </location>
</feature>
<feature type="strand" evidence="14">
    <location>
        <begin position="211"/>
        <end position="219"/>
    </location>
</feature>
<feature type="strand" evidence="14">
    <location>
        <begin position="221"/>
        <end position="228"/>
    </location>
</feature>
<feature type="strand" evidence="14">
    <location>
        <begin position="232"/>
        <end position="235"/>
    </location>
</feature>
<feature type="turn" evidence="15">
    <location>
        <begin position="238"/>
        <end position="241"/>
    </location>
</feature>
<feature type="turn" evidence="15">
    <location>
        <begin position="249"/>
        <end position="251"/>
    </location>
</feature>
<feature type="strand" evidence="15">
    <location>
        <begin position="263"/>
        <end position="266"/>
    </location>
</feature>
<feature type="strand" evidence="15">
    <location>
        <begin position="271"/>
        <end position="273"/>
    </location>
</feature>
<feature type="strand" evidence="15">
    <location>
        <begin position="279"/>
        <end position="285"/>
    </location>
</feature>
<feature type="strand" evidence="15">
    <location>
        <begin position="292"/>
        <end position="295"/>
    </location>
</feature>
<feature type="strand" evidence="15">
    <location>
        <begin position="298"/>
        <end position="300"/>
    </location>
</feature>
<feature type="strand" evidence="15">
    <location>
        <begin position="302"/>
        <end position="306"/>
    </location>
</feature>
<feature type="strand" evidence="15">
    <location>
        <begin position="309"/>
        <end position="313"/>
    </location>
</feature>
<feature type="strand" evidence="15">
    <location>
        <begin position="321"/>
        <end position="329"/>
    </location>
</feature>
<feature type="strand" evidence="15">
    <location>
        <begin position="332"/>
        <end position="335"/>
    </location>
</feature>
<feature type="strand" evidence="15">
    <location>
        <begin position="340"/>
        <end position="345"/>
    </location>
</feature>
<feature type="turn" evidence="15">
    <location>
        <begin position="351"/>
        <end position="361"/>
    </location>
</feature>
<feature type="helix" evidence="15">
    <location>
        <begin position="375"/>
        <end position="389"/>
    </location>
</feature>
<name>COE1_MOUSE</name>
<gene>
    <name type="primary">Ebf1</name>
    <name type="synonym">Coe1</name>
    <name type="synonym">Ebf</name>
</gene>
<proteinExistence type="evidence at protein level"/>
<dbReference type="EMBL" id="L12147">
    <property type="protein sequence ID" value="AAA37533.1"/>
    <property type="molecule type" value="mRNA"/>
</dbReference>
<dbReference type="CCDS" id="CCDS24566.1">
    <molecule id="Q07802-1"/>
</dbReference>
<dbReference type="PIR" id="A40684">
    <property type="entry name" value="A40684"/>
</dbReference>
<dbReference type="RefSeq" id="NP_001349503.1">
    <molecule id="Q07802-2"/>
    <property type="nucleotide sequence ID" value="NM_001362574.1"/>
</dbReference>
<dbReference type="RefSeq" id="NP_031923.1">
    <molecule id="Q07802-1"/>
    <property type="nucleotide sequence ID" value="NM_007897.3"/>
</dbReference>
<dbReference type="RefSeq" id="XP_006532219.1">
    <property type="nucleotide sequence ID" value="XM_006532156.3"/>
</dbReference>
<dbReference type="PDB" id="3MLN">
    <property type="method" value="X-ray"/>
    <property type="resolution" value="2.40 A"/>
    <property type="chains" value="A/B/E=24-241"/>
</dbReference>
<dbReference type="PDB" id="3MLO">
    <property type="method" value="X-ray"/>
    <property type="resolution" value="3.01 A"/>
    <property type="chains" value="A/B=24-241"/>
</dbReference>
<dbReference type="PDB" id="3MLP">
    <property type="method" value="X-ray"/>
    <property type="resolution" value="2.80 A"/>
    <property type="chains" value="A/B/E/F=24-421"/>
</dbReference>
<dbReference type="PDBsum" id="3MLN"/>
<dbReference type="PDBsum" id="3MLO"/>
<dbReference type="PDBsum" id="3MLP"/>
<dbReference type="SMR" id="Q07802"/>
<dbReference type="BioGRID" id="199358">
    <property type="interactions" value="1"/>
</dbReference>
<dbReference type="FunCoup" id="Q07802">
    <property type="interactions" value="2714"/>
</dbReference>
<dbReference type="STRING" id="10090.ENSMUSP00000099857"/>
<dbReference type="GlyGen" id="Q07802">
    <property type="glycosylation" value="2 sites, 1 O-linked glycan (1 site)"/>
</dbReference>
<dbReference type="iPTMnet" id="Q07802"/>
<dbReference type="PhosphoSitePlus" id="Q07802"/>
<dbReference type="PaxDb" id="10090-ENSMUSP00000080020"/>
<dbReference type="ProteomicsDB" id="283416">
    <molecule id="Q07802-1"/>
</dbReference>
<dbReference type="ProteomicsDB" id="283417">
    <molecule id="Q07802-2"/>
</dbReference>
<dbReference type="Pumba" id="Q07802"/>
<dbReference type="Antibodypedia" id="28482">
    <property type="antibodies" value="181 antibodies from 29 providers"/>
</dbReference>
<dbReference type="DNASU" id="13591"/>
<dbReference type="Ensembl" id="ENSMUST00000081265.12">
    <molecule id="Q07802-1"/>
    <property type="protein sequence ID" value="ENSMUSP00000080020.6"/>
    <property type="gene ID" value="ENSMUSG00000057098.15"/>
</dbReference>
<dbReference type="GeneID" id="13591"/>
<dbReference type="KEGG" id="mmu:13591"/>
<dbReference type="UCSC" id="uc007ink.2">
    <molecule id="Q07802-1"/>
    <property type="organism name" value="mouse"/>
</dbReference>
<dbReference type="AGR" id="MGI:95275"/>
<dbReference type="CTD" id="1879"/>
<dbReference type="MGI" id="MGI:95275">
    <property type="gene designation" value="Ebf1"/>
</dbReference>
<dbReference type="VEuPathDB" id="HostDB:ENSMUSG00000057098"/>
<dbReference type="eggNOG" id="KOG3836">
    <property type="taxonomic scope" value="Eukaryota"/>
</dbReference>
<dbReference type="GeneTree" id="ENSGT00950000182859"/>
<dbReference type="InParanoid" id="Q07802"/>
<dbReference type="OMA" id="FGSTTVW"/>
<dbReference type="OrthoDB" id="25246at2759"/>
<dbReference type="TreeFam" id="TF313391"/>
<dbReference type="BioGRID-ORCS" id="13591">
    <property type="hits" value="6 hits in 79 CRISPR screens"/>
</dbReference>
<dbReference type="CD-CODE" id="3521A8E2">
    <property type="entry name" value="Synthetic Condensate 000312"/>
</dbReference>
<dbReference type="CD-CODE" id="BC554416">
    <property type="entry name" value="Synthetic Condensate 000308"/>
</dbReference>
<dbReference type="CD-CODE" id="D0109C64">
    <property type="entry name" value="Synthetic Condensate 000306"/>
</dbReference>
<dbReference type="ChiTaRS" id="Ebf1">
    <property type="organism name" value="mouse"/>
</dbReference>
<dbReference type="EvolutionaryTrace" id="Q07802"/>
<dbReference type="PRO" id="PR:Q07802"/>
<dbReference type="Proteomes" id="UP000000589">
    <property type="component" value="Chromosome 11"/>
</dbReference>
<dbReference type="RNAct" id="Q07802">
    <property type="molecule type" value="protein"/>
</dbReference>
<dbReference type="Bgee" id="ENSMUSG00000057098">
    <property type="expression patterns" value="Expressed in external carotid artery and 261 other cell types or tissues"/>
</dbReference>
<dbReference type="ExpressionAtlas" id="Q07802">
    <property type="expression patterns" value="baseline and differential"/>
</dbReference>
<dbReference type="GO" id="GO:0005654">
    <property type="term" value="C:nucleoplasm"/>
    <property type="evidence" value="ECO:0000304"/>
    <property type="project" value="Reactome"/>
</dbReference>
<dbReference type="GO" id="GO:0005634">
    <property type="term" value="C:nucleus"/>
    <property type="evidence" value="ECO:0000314"/>
    <property type="project" value="MGI"/>
</dbReference>
<dbReference type="GO" id="GO:0003677">
    <property type="term" value="F:DNA binding"/>
    <property type="evidence" value="ECO:0000314"/>
    <property type="project" value="MGI"/>
</dbReference>
<dbReference type="GO" id="GO:0001228">
    <property type="term" value="F:DNA-binding transcription activator activity, RNA polymerase II-specific"/>
    <property type="evidence" value="ECO:0000314"/>
    <property type="project" value="NTNU_SB"/>
</dbReference>
<dbReference type="GO" id="GO:0003700">
    <property type="term" value="F:DNA-binding transcription factor activity"/>
    <property type="evidence" value="ECO:0000314"/>
    <property type="project" value="MGI"/>
</dbReference>
<dbReference type="GO" id="GO:0000978">
    <property type="term" value="F:RNA polymerase II cis-regulatory region sequence-specific DNA binding"/>
    <property type="evidence" value="ECO:0000314"/>
    <property type="project" value="NTNU_SB"/>
</dbReference>
<dbReference type="GO" id="GO:0008270">
    <property type="term" value="F:zinc ion binding"/>
    <property type="evidence" value="ECO:0007669"/>
    <property type="project" value="UniProtKB-KW"/>
</dbReference>
<dbReference type="GO" id="GO:0045893">
    <property type="term" value="P:positive regulation of DNA-templated transcription"/>
    <property type="evidence" value="ECO:0000314"/>
    <property type="project" value="MGI"/>
</dbReference>
<dbReference type="GO" id="GO:0045944">
    <property type="term" value="P:positive regulation of transcription by RNA polymerase II"/>
    <property type="evidence" value="ECO:0000314"/>
    <property type="project" value="NTNU_SB"/>
</dbReference>
<dbReference type="GO" id="GO:0006355">
    <property type="term" value="P:regulation of DNA-templated transcription"/>
    <property type="evidence" value="ECO:0000314"/>
    <property type="project" value="MGI"/>
</dbReference>
<dbReference type="CDD" id="cd11606">
    <property type="entry name" value="COE_DBD"/>
    <property type="match status" value="1"/>
</dbReference>
<dbReference type="CDD" id="cd01175">
    <property type="entry name" value="IPT_COE"/>
    <property type="match status" value="1"/>
</dbReference>
<dbReference type="FunFam" id="2.60.40.3180:FF:000004">
    <property type="entry name" value="Transcription factor COE1"/>
    <property type="match status" value="1"/>
</dbReference>
<dbReference type="FunFam" id="1.10.287.4280:FF:000001">
    <property type="entry name" value="transcription factor COE1 isoform X2"/>
    <property type="match status" value="1"/>
</dbReference>
<dbReference type="FunFam" id="2.60.40.10:FF:001696">
    <property type="entry name" value="Transcription factor COE3"/>
    <property type="match status" value="1"/>
</dbReference>
<dbReference type="Gene3D" id="1.10.287.4280">
    <property type="match status" value="1"/>
</dbReference>
<dbReference type="Gene3D" id="2.60.40.10">
    <property type="entry name" value="Immunoglobulins"/>
    <property type="match status" value="1"/>
</dbReference>
<dbReference type="Gene3D" id="2.60.40.3180">
    <property type="entry name" value="Transcription factor COE1, DNA-binding domain"/>
    <property type="match status" value="1"/>
</dbReference>
<dbReference type="InterPro" id="IPR032200">
    <property type="entry name" value="COE_DBD"/>
</dbReference>
<dbReference type="InterPro" id="IPR038173">
    <property type="entry name" value="COE_DBD_sf"/>
</dbReference>
<dbReference type="InterPro" id="IPR032201">
    <property type="entry name" value="COE_HLH"/>
</dbReference>
<dbReference type="InterPro" id="IPR038006">
    <property type="entry name" value="COE_IPT"/>
</dbReference>
<dbReference type="InterPro" id="IPR013783">
    <property type="entry name" value="Ig-like_fold"/>
</dbReference>
<dbReference type="InterPro" id="IPR014756">
    <property type="entry name" value="Ig_E-set"/>
</dbReference>
<dbReference type="InterPro" id="IPR002909">
    <property type="entry name" value="IPT_dom"/>
</dbReference>
<dbReference type="InterPro" id="IPR003523">
    <property type="entry name" value="Transcription_factor_COE"/>
</dbReference>
<dbReference type="InterPro" id="IPR018350">
    <property type="entry name" value="Transcription_factor_COE_CS"/>
</dbReference>
<dbReference type="PANTHER" id="PTHR10747">
    <property type="entry name" value="TRANSCRIPTION FACTOR COE FAMILY MEMBER"/>
    <property type="match status" value="1"/>
</dbReference>
<dbReference type="Pfam" id="PF16422">
    <property type="entry name" value="COE1_DBD"/>
    <property type="match status" value="1"/>
</dbReference>
<dbReference type="Pfam" id="PF16423">
    <property type="entry name" value="COE1_HLH"/>
    <property type="match status" value="1"/>
</dbReference>
<dbReference type="Pfam" id="PF01833">
    <property type="entry name" value="TIG"/>
    <property type="match status" value="1"/>
</dbReference>
<dbReference type="SMART" id="SM00429">
    <property type="entry name" value="IPT"/>
    <property type="match status" value="1"/>
</dbReference>
<dbReference type="SUPFAM" id="SSF81296">
    <property type="entry name" value="E set domains"/>
    <property type="match status" value="1"/>
</dbReference>
<dbReference type="PROSITE" id="PS01345">
    <property type="entry name" value="COE"/>
    <property type="match status" value="1"/>
</dbReference>
<organism>
    <name type="scientific">Mus musculus</name>
    <name type="common">Mouse</name>
    <dbReference type="NCBI Taxonomy" id="10090"/>
    <lineage>
        <taxon>Eukaryota</taxon>
        <taxon>Metazoa</taxon>
        <taxon>Chordata</taxon>
        <taxon>Craniata</taxon>
        <taxon>Vertebrata</taxon>
        <taxon>Euteleostomi</taxon>
        <taxon>Mammalia</taxon>
        <taxon>Eutheria</taxon>
        <taxon>Euarchontoglires</taxon>
        <taxon>Glires</taxon>
        <taxon>Rodentia</taxon>
        <taxon>Myomorpha</taxon>
        <taxon>Muroidea</taxon>
        <taxon>Muridae</taxon>
        <taxon>Murinae</taxon>
        <taxon>Mus</taxon>
        <taxon>Mus</taxon>
    </lineage>
</organism>
<reference key="1">
    <citation type="journal article" date="1993" name="Genes Dev.">
        <title>Cloning and functional characterization of early B-cell factor, a regulator of lymphocyte-specific gene expression.</title>
        <authorList>
            <person name="Hagman J."/>
            <person name="Belanger C."/>
            <person name="Travis A."/>
            <person name="Turck W."/>
            <person name="Grosschedl R."/>
        </authorList>
    </citation>
    <scope>NUCLEOTIDE SEQUENCE [MRNA]</scope>
    <scope>PROTEIN SEQUENCE OF 87-99; 122-129; 342-358 AND 382-390</scope>
    <source>
        <tissue>Lymphoid tissue</tissue>
    </source>
</reference>
<reference key="2">
    <citation type="journal article" date="1993" name="Mol. Cell. Biol.">
        <title>Purification of early-B-cell factor and characterization of its DNA-binding specificity.</title>
        <authorList>
            <person name="Travis A."/>
            <person name="Hagman J."/>
            <person name="Hwang L."/>
            <person name="Grosschedl R."/>
        </authorList>
    </citation>
    <scope>CHARACTERIZATION</scope>
</reference>
<reference key="3">
    <citation type="journal article" date="1991" name="EMBO J.">
        <title>A novel lineage-specific nuclear factor regulates mb-1 gene transcription at the early stages of B cell differentiation.</title>
        <authorList>
            <person name="Hagman J."/>
            <person name="Travis A."/>
            <person name="Grosschedl R."/>
        </authorList>
    </citation>
    <scope>FUNCTION</scope>
    <scope>SUBCELLULAR LOCATION</scope>
</reference>
<reference key="4">
    <citation type="journal article" date="1995" name="Nature">
        <title>Failure of B-cell differentiation in mice lacking the transcription factor EBF.</title>
        <authorList>
            <person name="Lin H."/>
            <person name="Grosschedl R."/>
        </authorList>
    </citation>
    <scope>FUNCTION</scope>
    <scope>DISRUPTION PHENOTYPE</scope>
</reference>
<reference key="5">
    <citation type="journal article" date="1997" name="J. Neurosci.">
        <title>The characterization of the Olf-1/EBF-like HLH transcription factor family: implications in olfactory gene regulation and neuronal development.</title>
        <authorList>
            <person name="Wang S.S."/>
            <person name="Tsai R.Y.L."/>
            <person name="Reed R.R."/>
        </authorList>
    </citation>
    <scope>SUBUNIT</scope>
    <scope>ALTERNATIVE SPLICING</scope>
    <source>
        <strain>CD-1</strain>
        <tissue>Embryo</tissue>
    </source>
</reference>
<reference key="6">
    <citation type="journal article" date="2010" name="Genes Dev.">
        <title>Structure of an Ebf1:DNA complex reveals unusual DNA recognition and structural homology with Rel proteins.</title>
        <authorList>
            <person name="Treiber N."/>
            <person name="Treiber T."/>
            <person name="Zocher G."/>
            <person name="Grosschedl R."/>
        </authorList>
    </citation>
    <scope>X-RAY CRYSTALLOGRAPHY (2.4 ANGSTROMS) OF 24-241 IN COMPLEX WITH TARGET DNA AND ZINC</scope>
    <scope>FUNCTION</scope>
    <scope>SUBUNIT</scope>
    <scope>MUTAGENESIS OF ARG-63; ASN-66; ARG-163; GLY-203 AND HIS-235</scope>
</reference>
<reference key="7">
    <citation type="journal article" date="2010" name="Immunity">
        <title>Early B cell factor 1 regulates B cell gene networks by activation, repression, and transcription- independent poising of chromatin.</title>
        <authorList>
            <person name="Treiber T."/>
            <person name="Mandel E.M."/>
            <person name="Pott S."/>
            <person name="Gyoery I."/>
            <person name="Firner S."/>
            <person name="Liu E.T."/>
            <person name="Grosschedl R."/>
        </authorList>
    </citation>
    <scope>FUNCTION</scope>
</reference>
<reference key="8">
    <citation type="journal article" date="2013" name="Nat. Immunol.">
        <title>Transcription factor EBF1 is essential for the maintenance of B cell identity and prevention of alternative fates in committed cells.</title>
        <authorList>
            <person name="Nechanitzky R."/>
            <person name="Akbas D."/>
            <person name="Scherer S."/>
            <person name="Gyoery I."/>
            <person name="Hoyler T."/>
            <person name="Ramamoorthy S."/>
            <person name="Diefenbach A."/>
            <person name="Grosschedl R."/>
        </authorList>
    </citation>
    <scope>FUNCTION</scope>
</reference>
<reference key="9">
    <citation type="journal article" date="2020" name="Cell Rep.">
        <title>Early B Cell Factor Activity Controls Developmental and Adaptive Thermogenic Gene Programming in Adipocytes.</title>
        <authorList>
            <person name="Angueira A.R."/>
            <person name="Shapira S.N."/>
            <person name="Ishibashi J."/>
            <person name="Sampat S."/>
            <person name="Sostre-Colon J."/>
            <person name="Emmett M.J."/>
            <person name="Titchenell P.M."/>
            <person name="Lazar M.A."/>
            <person name="Lim H.W."/>
            <person name="Seale P."/>
        </authorList>
    </citation>
    <scope>FUNCTION</scope>
    <scope>DISRUPTION PHENOTYPE</scope>
</reference>
<protein>
    <recommendedName>
        <fullName>Transcription factor COE1</fullName>
        <shortName>O/E-1</shortName>
        <shortName>OE-1</shortName>
    </recommendedName>
    <alternativeName>
        <fullName>Early B-cell factor</fullName>
    </alternativeName>
</protein>
<comment type="function">
    <text evidence="3 4 5 6 7 8">Key pioneer transcription factor of B-cell specification and commitment (PubMed:1915300, PubMed:23812095, PubMed:7542362). Recognizes variations of the palindromic sequence 5'-ATTCCCNNGGGAATT-3' (PubMed:20876732). Operates in a transcription factor network to activate B-cell-specific genes and repress genes associated with alternative cell fates (PubMed:20451411, PubMed:23812095). For instance, positively regulates many B-cell specific genes including BCR or CD40 while repressing genes that direct cells into alternative lineages, including GATA3 and TCF7 for the T-cell lineage (PubMed:20451411, PubMed:23812095). In addition to its role during lymphopoiesis, controls the thermogenic gene program in adipocytes during development and in response to environmental cold (PubMed:32130892).</text>
</comment>
<comment type="subunit">
    <text evidence="1 5 9">Homodimer (PubMed:20876732, PubMed:9151732). Interacts with ZNF423 and ZNF521, leading to prevent EBF1 to bind DNA and activate target genes (By similarity). Interacts with CCR4-NOT component CNOT3 (By similarity).</text>
</comment>
<comment type="subcellular location">
    <subcellularLocation>
        <location evidence="3">Nucleus</location>
    </subcellularLocation>
</comment>
<comment type="alternative products">
    <event type="alternative splicing"/>
    <isoform>
        <id>Q07802-1</id>
        <name>Long</name>
        <name>8</name>
        <sequence type="displayed"/>
    </isoform>
    <isoform>
        <id>Q07802-2</id>
        <name>Short</name>
        <name>O</name>
        <sequence type="described" ref="VSP_001112"/>
    </isoform>
</comment>
<comment type="tissue specificity">
    <text>Expressed at high levels in early B-cells, spleen, lymph node and adipose tissue, and at low levels in heart, brain, skeletal muscle and kidney. In adult expressed in olfactory epithelium, in spleen, and at a lesser extent in Purkinje cells of the cerebellum, heart, kidney, lung, thymus and testis. In embryo expressed in dorsal thalamus and epithalamus, at a lower level in mesencephalon and in the caudal rhombencephalon, in the postmitotic cells of developing retina, highly in developing spinal cord, dorsal root ganglia, trigeminal ganglia and in glossopharyngeal nerve ganglia, in developing inner ear.</text>
</comment>
<comment type="developmental stage">
    <text>First detected at 9.5 dpc.</text>
</comment>
<comment type="disruption phenotype">
    <text evidence="7 8">Targeted disruption in mice results in animals with a severe defect in early B-cell development. EBF1 heterozygous mice exhibit an approximately 2-fold decrease in the number of cells in the pro-B lymphocyte compartment, indicating that normal B-cell development depends on the presence of two wild-type EBF1 alleles (PubMed:7542362). Adipocyte-specific deletion mutant reveals a modest reduction of UCP1 expression, a mitochondrial protein responsible for thermogenic respiration. Double mutants EBF1/EBF2 show a more severe reduction of UCP1 expression (PubMed:32130892).</text>
</comment>
<comment type="similarity">
    <text evidence="10">Belongs to the COE family.</text>
</comment>
<sequence>MFGIQESIQRSGSSMKEEPLGSGMNAVRTWMQGAGVLDANTAAQSGVGLARAHFEKQPPSNLRKSNFFHFVLALYDRQGQPVEIERTAFVGFVEKEKEANSEKTNNGIHYRLQLLYSNGIRTEQDFYVRLIDSMTKQAIVYEGQDKNPEMCRVLLTHEIMCSRCCDKKSCGNRNETPSDPVIIDRFFLKFFLKCNQNCLKNAGNPRDMRRFQVVVSTTVNVDGHVLAVSDNMFVHNNSKHGRRARRLDPSEGTPSYLEHATPCIKAISPSEGWTTGGATVIIIGDNFFDGLQVIFGTMLVWSELITPHAIRVQTPPRHIPGVVEVTLSYKSKQFCKGTPGRFIYTALNEPTIDYGFQRLQKVIPRHPGDPERLPKEVILKRAADLVEALYGMPHNNQEIILKRAADIAEALYSVPRNHNQLPALANTSVHAGMMGVNSFSGQLAVNVSEASQATNQGFTRNSSSVSPHGYVPSTTPQQTNYNSVTTSMNGYGSAAMSNLGGSPTFLNGSAANSPYAIVPSSPTMASSTSLPSNCSSSSGIFSFSPANMVSAVKQKSAFAPVVRPQTSPPPTCTSTNGNSLQAISGMIVPPM</sequence>
<keyword id="KW-0002">3D-structure</keyword>
<keyword id="KW-0007">Acetylation</keyword>
<keyword id="KW-0010">Activator</keyword>
<keyword id="KW-0025">Alternative splicing</keyword>
<keyword id="KW-0217">Developmental protein</keyword>
<keyword id="KW-0903">Direct protein sequencing</keyword>
<keyword id="KW-0238">DNA-binding</keyword>
<keyword id="KW-1017">Isopeptide bond</keyword>
<keyword id="KW-0479">Metal-binding</keyword>
<keyword id="KW-0539">Nucleus</keyword>
<keyword id="KW-1185">Reference proteome</keyword>
<keyword id="KW-0804">Transcription</keyword>
<keyword id="KW-0805">Transcription regulation</keyword>
<keyword id="KW-0832">Ubl conjugation</keyword>
<keyword id="KW-0862">Zinc</keyword>
<keyword id="KW-0863">Zinc-finger</keyword>